<organism>
    <name type="scientific">Vibrio atlanticus (strain LGP32)</name>
    <name type="common">Vibrio splendidus (strain Mel32)</name>
    <dbReference type="NCBI Taxonomy" id="575788"/>
    <lineage>
        <taxon>Bacteria</taxon>
        <taxon>Pseudomonadati</taxon>
        <taxon>Pseudomonadota</taxon>
        <taxon>Gammaproteobacteria</taxon>
        <taxon>Vibrionales</taxon>
        <taxon>Vibrionaceae</taxon>
        <taxon>Vibrio</taxon>
    </lineage>
</organism>
<reference key="1">
    <citation type="submission" date="2009-02" db="EMBL/GenBank/DDBJ databases">
        <title>Vibrio splendidus str. LGP32 complete genome.</title>
        <authorList>
            <person name="Mazel D."/>
            <person name="Le Roux F."/>
        </authorList>
    </citation>
    <scope>NUCLEOTIDE SEQUENCE [LARGE SCALE GENOMIC DNA]</scope>
    <source>
        <strain>LGP32</strain>
    </source>
</reference>
<sequence length="100" mass="11145">MITEERILKVLRAPHISEKATMAAEKANTIVFKVAKDATKKEIKAAVEKLFEVEVKSVNTLVLKGKTKRQGMREGRRSDVKKAYVTLKEGQDLDFVGGAE</sequence>
<gene>
    <name evidence="1" type="primary">rplW</name>
    <name type="ordered locus">VS_2830</name>
</gene>
<name>RL23_VIBA3</name>
<proteinExistence type="inferred from homology"/>
<comment type="function">
    <text evidence="1">One of the early assembly proteins it binds 23S rRNA. One of the proteins that surrounds the polypeptide exit tunnel on the outside of the ribosome. Forms the main docking site for trigger factor binding to the ribosome.</text>
</comment>
<comment type="subunit">
    <text evidence="1">Part of the 50S ribosomal subunit. Contacts protein L29, and trigger factor when it is bound to the ribosome.</text>
</comment>
<comment type="similarity">
    <text evidence="1">Belongs to the universal ribosomal protein uL23 family.</text>
</comment>
<evidence type="ECO:0000255" key="1">
    <source>
        <dbReference type="HAMAP-Rule" id="MF_01369"/>
    </source>
</evidence>
<evidence type="ECO:0000305" key="2"/>
<accession>B7VLF5</accession>
<protein>
    <recommendedName>
        <fullName evidence="1">Large ribosomal subunit protein uL23</fullName>
    </recommendedName>
    <alternativeName>
        <fullName evidence="2">50S ribosomal protein L23</fullName>
    </alternativeName>
</protein>
<dbReference type="EMBL" id="FM954972">
    <property type="protein sequence ID" value="CAV20123.1"/>
    <property type="molecule type" value="Genomic_DNA"/>
</dbReference>
<dbReference type="SMR" id="B7VLF5"/>
<dbReference type="STRING" id="575788.VS_2830"/>
<dbReference type="KEGG" id="vsp:VS_2830"/>
<dbReference type="eggNOG" id="COG0089">
    <property type="taxonomic scope" value="Bacteria"/>
</dbReference>
<dbReference type="HOGENOM" id="CLU_037562_3_1_6"/>
<dbReference type="Proteomes" id="UP000009100">
    <property type="component" value="Chromosome 1"/>
</dbReference>
<dbReference type="GO" id="GO:1990904">
    <property type="term" value="C:ribonucleoprotein complex"/>
    <property type="evidence" value="ECO:0007669"/>
    <property type="project" value="UniProtKB-KW"/>
</dbReference>
<dbReference type="GO" id="GO:0005840">
    <property type="term" value="C:ribosome"/>
    <property type="evidence" value="ECO:0007669"/>
    <property type="project" value="UniProtKB-KW"/>
</dbReference>
<dbReference type="GO" id="GO:0019843">
    <property type="term" value="F:rRNA binding"/>
    <property type="evidence" value="ECO:0007669"/>
    <property type="project" value="UniProtKB-UniRule"/>
</dbReference>
<dbReference type="GO" id="GO:0003735">
    <property type="term" value="F:structural constituent of ribosome"/>
    <property type="evidence" value="ECO:0007669"/>
    <property type="project" value="InterPro"/>
</dbReference>
<dbReference type="GO" id="GO:0006412">
    <property type="term" value="P:translation"/>
    <property type="evidence" value="ECO:0007669"/>
    <property type="project" value="UniProtKB-UniRule"/>
</dbReference>
<dbReference type="FunFam" id="3.30.70.330:FF:000001">
    <property type="entry name" value="50S ribosomal protein L23"/>
    <property type="match status" value="1"/>
</dbReference>
<dbReference type="Gene3D" id="3.30.70.330">
    <property type="match status" value="1"/>
</dbReference>
<dbReference type="HAMAP" id="MF_01369_B">
    <property type="entry name" value="Ribosomal_uL23_B"/>
    <property type="match status" value="1"/>
</dbReference>
<dbReference type="InterPro" id="IPR012677">
    <property type="entry name" value="Nucleotide-bd_a/b_plait_sf"/>
</dbReference>
<dbReference type="InterPro" id="IPR013025">
    <property type="entry name" value="Ribosomal_uL23-like"/>
</dbReference>
<dbReference type="InterPro" id="IPR012678">
    <property type="entry name" value="Ribosomal_uL23/eL15/eS24_sf"/>
</dbReference>
<dbReference type="InterPro" id="IPR001014">
    <property type="entry name" value="Ribosomal_uL23_CS"/>
</dbReference>
<dbReference type="NCBIfam" id="NF004358">
    <property type="entry name" value="PRK05738.1-1"/>
    <property type="match status" value="1"/>
</dbReference>
<dbReference type="NCBIfam" id="NF004359">
    <property type="entry name" value="PRK05738.1-3"/>
    <property type="match status" value="1"/>
</dbReference>
<dbReference type="NCBIfam" id="NF004360">
    <property type="entry name" value="PRK05738.1-5"/>
    <property type="match status" value="1"/>
</dbReference>
<dbReference type="NCBIfam" id="NF004363">
    <property type="entry name" value="PRK05738.2-4"/>
    <property type="match status" value="1"/>
</dbReference>
<dbReference type="PANTHER" id="PTHR11620">
    <property type="entry name" value="60S RIBOSOMAL PROTEIN L23A"/>
    <property type="match status" value="1"/>
</dbReference>
<dbReference type="Pfam" id="PF00276">
    <property type="entry name" value="Ribosomal_L23"/>
    <property type="match status" value="1"/>
</dbReference>
<dbReference type="SUPFAM" id="SSF54189">
    <property type="entry name" value="Ribosomal proteins S24e, L23 and L15e"/>
    <property type="match status" value="1"/>
</dbReference>
<dbReference type="PROSITE" id="PS00050">
    <property type="entry name" value="RIBOSOMAL_L23"/>
    <property type="match status" value="1"/>
</dbReference>
<keyword id="KW-0687">Ribonucleoprotein</keyword>
<keyword id="KW-0689">Ribosomal protein</keyword>
<keyword id="KW-0694">RNA-binding</keyword>
<keyword id="KW-0699">rRNA-binding</keyword>
<feature type="chain" id="PRO_1000184115" description="Large ribosomal subunit protein uL23">
    <location>
        <begin position="1"/>
        <end position="100"/>
    </location>
</feature>